<reference key="1">
    <citation type="journal article" date="2007" name="J. Bacteriol.">
        <title>The complete genome sequence of Roseobacter denitrificans reveals a mixotrophic rather than photosynthetic metabolism.</title>
        <authorList>
            <person name="Swingley W.D."/>
            <person name="Sadekar S."/>
            <person name="Mastrian S.D."/>
            <person name="Matthies H.J."/>
            <person name="Hao J."/>
            <person name="Ramos H."/>
            <person name="Acharya C.R."/>
            <person name="Conrad A.L."/>
            <person name="Taylor H.L."/>
            <person name="Dejesa L.C."/>
            <person name="Shah M.K."/>
            <person name="O'Huallachain M.E."/>
            <person name="Lince M.T."/>
            <person name="Blankenship R.E."/>
            <person name="Beatty J.T."/>
            <person name="Touchman J.W."/>
        </authorList>
    </citation>
    <scope>NUCLEOTIDE SEQUENCE [LARGE SCALE GENOMIC DNA]</scope>
    <source>
        <strain>ATCC 33942 / OCh 114</strain>
    </source>
</reference>
<proteinExistence type="inferred from homology"/>
<accession>Q168B1</accession>
<evidence type="ECO:0000255" key="1">
    <source>
        <dbReference type="HAMAP-Rule" id="MF_00494"/>
    </source>
</evidence>
<sequence length="217" mass="23301">MKFFVDTADTQAIAELNDLGMVDGVTTNPSLILKSGRDIIEVTKEICGIVSGPVSAEVVALEAEAMIAEGRKLAEIAENITVKLPLTWDGLKACKTLSDEGKMVNVTLCFSANQALLAAKAGASFISPFIGRLDDMSLDGCELIEDIRTIYDNYGFGTEILAASIRTVNHVQQVALIGADVMTAPPEVIQKLASHPLTDKGLQQFMSDWEKTGQKIL</sequence>
<gene>
    <name evidence="1" type="primary">tal</name>
    <name type="ordered locus">RD1_2080</name>
</gene>
<comment type="function">
    <text evidence="1">Transaldolase is important for the balance of metabolites in the pentose-phosphate pathway.</text>
</comment>
<comment type="catalytic activity">
    <reaction evidence="1">
        <text>D-sedoheptulose 7-phosphate + D-glyceraldehyde 3-phosphate = D-erythrose 4-phosphate + beta-D-fructose 6-phosphate</text>
        <dbReference type="Rhea" id="RHEA:17053"/>
        <dbReference type="ChEBI" id="CHEBI:16897"/>
        <dbReference type="ChEBI" id="CHEBI:57483"/>
        <dbReference type="ChEBI" id="CHEBI:57634"/>
        <dbReference type="ChEBI" id="CHEBI:59776"/>
        <dbReference type="EC" id="2.2.1.2"/>
    </reaction>
</comment>
<comment type="pathway">
    <text evidence="1">Carbohydrate degradation; pentose phosphate pathway; D-glyceraldehyde 3-phosphate and beta-D-fructose 6-phosphate from D-ribose 5-phosphate and D-xylulose 5-phosphate (non-oxidative stage): step 2/3.</text>
</comment>
<comment type="subcellular location">
    <subcellularLocation>
        <location evidence="1">Cytoplasm</location>
    </subcellularLocation>
</comment>
<comment type="similarity">
    <text evidence="1">Belongs to the transaldolase family. Type 3B subfamily.</text>
</comment>
<organism>
    <name type="scientific">Roseobacter denitrificans (strain ATCC 33942 / OCh 114)</name>
    <name type="common">Erythrobacter sp. (strain OCh 114)</name>
    <name type="synonym">Roseobacter denitrificans</name>
    <dbReference type="NCBI Taxonomy" id="375451"/>
    <lineage>
        <taxon>Bacteria</taxon>
        <taxon>Pseudomonadati</taxon>
        <taxon>Pseudomonadota</taxon>
        <taxon>Alphaproteobacteria</taxon>
        <taxon>Rhodobacterales</taxon>
        <taxon>Roseobacteraceae</taxon>
        <taxon>Roseobacter</taxon>
    </lineage>
</organism>
<feature type="chain" id="PRO_1000126352" description="Probable transaldolase">
    <location>
        <begin position="1"/>
        <end position="217"/>
    </location>
</feature>
<feature type="active site" description="Schiff-base intermediate with substrate" evidence="1">
    <location>
        <position position="83"/>
    </location>
</feature>
<protein>
    <recommendedName>
        <fullName evidence="1">Probable transaldolase</fullName>
        <ecNumber evidence="1">2.2.1.2</ecNumber>
    </recommendedName>
</protein>
<dbReference type="EC" id="2.2.1.2" evidence="1"/>
<dbReference type="EMBL" id="CP000362">
    <property type="protein sequence ID" value="ABG31682.1"/>
    <property type="molecule type" value="Genomic_DNA"/>
</dbReference>
<dbReference type="RefSeq" id="WP_011568299.1">
    <property type="nucleotide sequence ID" value="NC_008209.1"/>
</dbReference>
<dbReference type="SMR" id="Q168B1"/>
<dbReference type="STRING" id="375451.RD1_2080"/>
<dbReference type="KEGG" id="rde:RD1_2080"/>
<dbReference type="eggNOG" id="COG0176">
    <property type="taxonomic scope" value="Bacteria"/>
</dbReference>
<dbReference type="HOGENOM" id="CLU_079764_0_0_5"/>
<dbReference type="OrthoDB" id="9807051at2"/>
<dbReference type="UniPathway" id="UPA00115">
    <property type="reaction ID" value="UER00414"/>
</dbReference>
<dbReference type="Proteomes" id="UP000007029">
    <property type="component" value="Chromosome"/>
</dbReference>
<dbReference type="GO" id="GO:0005737">
    <property type="term" value="C:cytoplasm"/>
    <property type="evidence" value="ECO:0007669"/>
    <property type="project" value="UniProtKB-SubCell"/>
</dbReference>
<dbReference type="GO" id="GO:0016832">
    <property type="term" value="F:aldehyde-lyase activity"/>
    <property type="evidence" value="ECO:0007669"/>
    <property type="project" value="InterPro"/>
</dbReference>
<dbReference type="GO" id="GO:0004801">
    <property type="term" value="F:transaldolase activity"/>
    <property type="evidence" value="ECO:0007669"/>
    <property type="project" value="UniProtKB-UniRule"/>
</dbReference>
<dbReference type="GO" id="GO:0005975">
    <property type="term" value="P:carbohydrate metabolic process"/>
    <property type="evidence" value="ECO:0007669"/>
    <property type="project" value="InterPro"/>
</dbReference>
<dbReference type="GO" id="GO:0006098">
    <property type="term" value="P:pentose-phosphate shunt"/>
    <property type="evidence" value="ECO:0007669"/>
    <property type="project" value="UniProtKB-UniRule"/>
</dbReference>
<dbReference type="CDD" id="cd00956">
    <property type="entry name" value="Transaldolase_FSA"/>
    <property type="match status" value="1"/>
</dbReference>
<dbReference type="FunFam" id="3.20.20.70:FF:000018">
    <property type="entry name" value="Probable transaldolase"/>
    <property type="match status" value="1"/>
</dbReference>
<dbReference type="Gene3D" id="3.20.20.70">
    <property type="entry name" value="Aldolase class I"/>
    <property type="match status" value="1"/>
</dbReference>
<dbReference type="HAMAP" id="MF_00494">
    <property type="entry name" value="Transaldolase_3b"/>
    <property type="match status" value="1"/>
</dbReference>
<dbReference type="InterPro" id="IPR013785">
    <property type="entry name" value="Aldolase_TIM"/>
</dbReference>
<dbReference type="InterPro" id="IPR001585">
    <property type="entry name" value="TAL/FSA"/>
</dbReference>
<dbReference type="InterPro" id="IPR022999">
    <property type="entry name" value="Transaldolase_3B"/>
</dbReference>
<dbReference type="InterPro" id="IPR004731">
    <property type="entry name" value="Transaldolase_3B/F6P_aldolase"/>
</dbReference>
<dbReference type="InterPro" id="IPR018225">
    <property type="entry name" value="Transaldolase_AS"/>
</dbReference>
<dbReference type="InterPro" id="IPR033919">
    <property type="entry name" value="TSA/FSA_arc/bac"/>
</dbReference>
<dbReference type="NCBIfam" id="TIGR00875">
    <property type="entry name" value="fsa_talC_mipB"/>
    <property type="match status" value="1"/>
</dbReference>
<dbReference type="PANTHER" id="PTHR10683:SF40">
    <property type="entry name" value="FRUCTOSE-6-PHOSPHATE ALDOLASE 1-RELATED"/>
    <property type="match status" value="1"/>
</dbReference>
<dbReference type="PANTHER" id="PTHR10683">
    <property type="entry name" value="TRANSALDOLASE"/>
    <property type="match status" value="1"/>
</dbReference>
<dbReference type="Pfam" id="PF00923">
    <property type="entry name" value="TAL_FSA"/>
    <property type="match status" value="1"/>
</dbReference>
<dbReference type="SUPFAM" id="SSF51569">
    <property type="entry name" value="Aldolase"/>
    <property type="match status" value="1"/>
</dbReference>
<dbReference type="PROSITE" id="PS01054">
    <property type="entry name" value="TRANSALDOLASE_1"/>
    <property type="match status" value="1"/>
</dbReference>
<dbReference type="PROSITE" id="PS00958">
    <property type="entry name" value="TRANSALDOLASE_2"/>
    <property type="match status" value="1"/>
</dbReference>
<keyword id="KW-0963">Cytoplasm</keyword>
<keyword id="KW-0570">Pentose shunt</keyword>
<keyword id="KW-1185">Reference proteome</keyword>
<keyword id="KW-0704">Schiff base</keyword>
<keyword id="KW-0808">Transferase</keyword>
<name>TAL_ROSDO</name>